<organism>
    <name type="scientific">Arabidopsis thaliana</name>
    <name type="common">Mouse-ear cress</name>
    <dbReference type="NCBI Taxonomy" id="3702"/>
    <lineage>
        <taxon>Eukaryota</taxon>
        <taxon>Viridiplantae</taxon>
        <taxon>Streptophyta</taxon>
        <taxon>Embryophyta</taxon>
        <taxon>Tracheophyta</taxon>
        <taxon>Spermatophyta</taxon>
        <taxon>Magnoliopsida</taxon>
        <taxon>eudicotyledons</taxon>
        <taxon>Gunneridae</taxon>
        <taxon>Pentapetalae</taxon>
        <taxon>rosids</taxon>
        <taxon>malvids</taxon>
        <taxon>Brassicales</taxon>
        <taxon>Brassicaceae</taxon>
        <taxon>Camelineae</taxon>
        <taxon>Arabidopsis</taxon>
    </lineage>
</organism>
<gene>
    <name type="primary">ENT4</name>
    <name type="ordered locus">At4g05130</name>
    <name type="ORF">C17L7.50</name>
    <name type="ORF">T32N4</name>
</gene>
<reference key="1">
    <citation type="journal article" date="2003" name="J. Biol. Chem.">
        <title>Equilibrative nucleoside transporters of Arabidopsis thaliana. cDNA cloning, expression pattern, and analysis of transport activities.</title>
        <authorList>
            <person name="Li G."/>
            <person name="Liu K."/>
            <person name="Baldwin S.A."/>
            <person name="Wang D."/>
        </authorList>
    </citation>
    <scope>NUCLEOTIDE SEQUENCE [MRNA]</scope>
    <scope>TISSUE SPECIFICITY</scope>
    <scope>INDUCTION</scope>
</reference>
<reference key="2">
    <citation type="journal article" date="1999" name="Nature">
        <title>Sequence and analysis of chromosome 4 of the plant Arabidopsis thaliana.</title>
        <authorList>
            <person name="Mayer K.F.X."/>
            <person name="Schueller C."/>
            <person name="Wambutt R."/>
            <person name="Murphy G."/>
            <person name="Volckaert G."/>
            <person name="Pohl T."/>
            <person name="Duesterhoeft A."/>
            <person name="Stiekema W."/>
            <person name="Entian K.-D."/>
            <person name="Terryn N."/>
            <person name="Harris B."/>
            <person name="Ansorge W."/>
            <person name="Brandt P."/>
            <person name="Grivell L.A."/>
            <person name="Rieger M."/>
            <person name="Weichselgartner M."/>
            <person name="de Simone V."/>
            <person name="Obermaier B."/>
            <person name="Mache R."/>
            <person name="Mueller M."/>
            <person name="Kreis M."/>
            <person name="Delseny M."/>
            <person name="Puigdomenech P."/>
            <person name="Watson M."/>
            <person name="Schmidtheini T."/>
            <person name="Reichert B."/>
            <person name="Portetelle D."/>
            <person name="Perez-Alonso M."/>
            <person name="Boutry M."/>
            <person name="Bancroft I."/>
            <person name="Vos P."/>
            <person name="Hoheisel J."/>
            <person name="Zimmermann W."/>
            <person name="Wedler H."/>
            <person name="Ridley P."/>
            <person name="Langham S.-A."/>
            <person name="McCullagh B."/>
            <person name="Bilham L."/>
            <person name="Robben J."/>
            <person name="van der Schueren J."/>
            <person name="Grymonprez B."/>
            <person name="Chuang Y.-J."/>
            <person name="Vandenbussche F."/>
            <person name="Braeken M."/>
            <person name="Weltjens I."/>
            <person name="Voet M."/>
            <person name="Bastiaens I."/>
            <person name="Aert R."/>
            <person name="Defoor E."/>
            <person name="Weitzenegger T."/>
            <person name="Bothe G."/>
            <person name="Ramsperger U."/>
            <person name="Hilbert H."/>
            <person name="Braun M."/>
            <person name="Holzer E."/>
            <person name="Brandt A."/>
            <person name="Peters S."/>
            <person name="van Staveren M."/>
            <person name="Dirkse W."/>
            <person name="Mooijman P."/>
            <person name="Klein Lankhorst R."/>
            <person name="Rose M."/>
            <person name="Hauf J."/>
            <person name="Koetter P."/>
            <person name="Berneiser S."/>
            <person name="Hempel S."/>
            <person name="Feldpausch M."/>
            <person name="Lamberth S."/>
            <person name="Van den Daele H."/>
            <person name="De Keyser A."/>
            <person name="Buysshaert C."/>
            <person name="Gielen J."/>
            <person name="Villarroel R."/>
            <person name="De Clercq R."/>
            <person name="van Montagu M."/>
            <person name="Rogers J."/>
            <person name="Cronin A."/>
            <person name="Quail M.A."/>
            <person name="Bray-Allen S."/>
            <person name="Clark L."/>
            <person name="Doggett J."/>
            <person name="Hall S."/>
            <person name="Kay M."/>
            <person name="Lennard N."/>
            <person name="McLay K."/>
            <person name="Mayes R."/>
            <person name="Pettett A."/>
            <person name="Rajandream M.A."/>
            <person name="Lyne M."/>
            <person name="Benes V."/>
            <person name="Rechmann S."/>
            <person name="Borkova D."/>
            <person name="Bloecker H."/>
            <person name="Scharfe M."/>
            <person name="Grimm M."/>
            <person name="Loehnert T.-H."/>
            <person name="Dose S."/>
            <person name="de Haan M."/>
            <person name="Maarse A.C."/>
            <person name="Schaefer M."/>
            <person name="Mueller-Auer S."/>
            <person name="Gabel C."/>
            <person name="Fuchs M."/>
            <person name="Fartmann B."/>
            <person name="Granderath K."/>
            <person name="Dauner D."/>
            <person name="Herzl A."/>
            <person name="Neumann S."/>
            <person name="Argiriou A."/>
            <person name="Vitale D."/>
            <person name="Liguori R."/>
            <person name="Piravandi E."/>
            <person name="Massenet O."/>
            <person name="Quigley F."/>
            <person name="Clabauld G."/>
            <person name="Muendlein A."/>
            <person name="Felber R."/>
            <person name="Schnabl S."/>
            <person name="Hiller R."/>
            <person name="Schmidt W."/>
            <person name="Lecharny A."/>
            <person name="Aubourg S."/>
            <person name="Chefdor F."/>
            <person name="Cooke R."/>
            <person name="Berger C."/>
            <person name="Monfort A."/>
            <person name="Casacuberta E."/>
            <person name="Gibbons T."/>
            <person name="Weber N."/>
            <person name="Vandenbol M."/>
            <person name="Bargues M."/>
            <person name="Terol J."/>
            <person name="Torres A."/>
            <person name="Perez-Perez A."/>
            <person name="Purnelle B."/>
            <person name="Bent E."/>
            <person name="Johnson S."/>
            <person name="Tacon D."/>
            <person name="Jesse T."/>
            <person name="Heijnen L."/>
            <person name="Schwarz S."/>
            <person name="Scholler P."/>
            <person name="Heber S."/>
            <person name="Francs P."/>
            <person name="Bielke C."/>
            <person name="Frishman D."/>
            <person name="Haase D."/>
            <person name="Lemcke K."/>
            <person name="Mewes H.-W."/>
            <person name="Stocker S."/>
            <person name="Zaccaria P."/>
            <person name="Bevan M."/>
            <person name="Wilson R.K."/>
            <person name="de la Bastide M."/>
            <person name="Habermann K."/>
            <person name="Parnell L."/>
            <person name="Dedhia N."/>
            <person name="Gnoj L."/>
            <person name="Schutz K."/>
            <person name="Huang E."/>
            <person name="Spiegel L."/>
            <person name="Sekhon M."/>
            <person name="Murray J."/>
            <person name="Sheet P."/>
            <person name="Cordes M."/>
            <person name="Abu-Threideh J."/>
            <person name="Stoneking T."/>
            <person name="Kalicki J."/>
            <person name="Graves T."/>
            <person name="Harmon G."/>
            <person name="Edwards J."/>
            <person name="Latreille P."/>
            <person name="Courtney L."/>
            <person name="Cloud J."/>
            <person name="Abbott A."/>
            <person name="Scott K."/>
            <person name="Johnson D."/>
            <person name="Minx P."/>
            <person name="Bentley D."/>
            <person name="Fulton B."/>
            <person name="Miller N."/>
            <person name="Greco T."/>
            <person name="Kemp K."/>
            <person name="Kramer J."/>
            <person name="Fulton L."/>
            <person name="Mardis E."/>
            <person name="Dante M."/>
            <person name="Pepin K."/>
            <person name="Hillier L.W."/>
            <person name="Nelson J."/>
            <person name="Spieth J."/>
            <person name="Ryan E."/>
            <person name="Andrews S."/>
            <person name="Geisel C."/>
            <person name="Layman D."/>
            <person name="Du H."/>
            <person name="Ali J."/>
            <person name="Berghoff A."/>
            <person name="Jones K."/>
            <person name="Drone K."/>
            <person name="Cotton M."/>
            <person name="Joshu C."/>
            <person name="Antonoiu B."/>
            <person name="Zidanic M."/>
            <person name="Strong C."/>
            <person name="Sun H."/>
            <person name="Lamar B."/>
            <person name="Yordan C."/>
            <person name="Ma P."/>
            <person name="Zhong J."/>
            <person name="Preston R."/>
            <person name="Vil D."/>
            <person name="Shekher M."/>
            <person name="Matero A."/>
            <person name="Shah R."/>
            <person name="Swaby I.K."/>
            <person name="O'Shaughnessy A."/>
            <person name="Rodriguez M."/>
            <person name="Hoffman J."/>
            <person name="Till S."/>
            <person name="Granat S."/>
            <person name="Shohdy N."/>
            <person name="Hasegawa A."/>
            <person name="Hameed A."/>
            <person name="Lodhi M."/>
            <person name="Johnson A."/>
            <person name="Chen E."/>
            <person name="Marra M.A."/>
            <person name="Martienssen R."/>
            <person name="McCombie W.R."/>
        </authorList>
    </citation>
    <scope>NUCLEOTIDE SEQUENCE [LARGE SCALE GENOMIC DNA]</scope>
    <source>
        <strain>cv. Columbia</strain>
    </source>
</reference>
<reference key="3">
    <citation type="journal article" date="2017" name="Plant J.">
        <title>Araport11: a complete reannotation of the Arabidopsis thaliana reference genome.</title>
        <authorList>
            <person name="Cheng C.Y."/>
            <person name="Krishnakumar V."/>
            <person name="Chan A.P."/>
            <person name="Thibaud-Nissen F."/>
            <person name="Schobel S."/>
            <person name="Town C.D."/>
        </authorList>
    </citation>
    <scope>GENOME REANNOTATION</scope>
    <source>
        <strain>cv. Columbia</strain>
    </source>
</reference>
<reference key="4">
    <citation type="journal article" date="2004" name="Biochem. J.">
        <title>Characterization of three novel members of the Arabidopsis thaliana equilibrative nucleoside transporter (ENT) family.</title>
        <authorList>
            <person name="Wormit A."/>
            <person name="Traub M."/>
            <person name="Floerchinger M."/>
            <person name="Neuhaus H.E."/>
            <person name="Moehlmann T."/>
        </authorList>
    </citation>
    <scope>FUNCTION</scope>
    <scope>BIOPHYSICOCHEMICAL PROPERTIES</scope>
</reference>
<proteinExistence type="evidence at protein level"/>
<keyword id="KW-1003">Cell membrane</keyword>
<keyword id="KW-0472">Membrane</keyword>
<keyword id="KW-1185">Reference proteome</keyword>
<keyword id="KW-0812">Transmembrane</keyword>
<keyword id="KW-1133">Transmembrane helix</keyword>
<keyword id="KW-0813">Transport</keyword>
<evidence type="ECO:0000250" key="1"/>
<evidence type="ECO:0000255" key="2"/>
<evidence type="ECO:0000269" key="3">
    <source>
    </source>
</evidence>
<evidence type="ECO:0000269" key="4">
    <source>
    </source>
</evidence>
<evidence type="ECO:0000305" key="5"/>
<sequence length="418" mass="46294">MADGYENHAPENLQGKYQAMVVCCILGIGSLFSWNSMLTIADYYYQVFPDYHPSRVFTLIYQPIALGTIMILAYRESKISTRKRILTGYILFTISTFLLIVLDLTTKGHGGIGHYIVLCTIVASFGLADATVKGGLVGDLSLMCPELIQSYMAGSGMAGALTSVLRLITKAAFEKSNNSLRKGAMIFLAISTFIELLCVILYAYVFPKLPIVKYYRRKAASEGSKTVVADLAAAGIQNLSDLSDDDSKNQMLRKKELLLQNIDHAVNLFLIYVLTLSIFPGFLYENTGQHGLGDWYALILVATYNFWDLFGRYAPLVKWLKLENRKALTIAVLTRYFLVPAFYFTAKYGDKGWMIMLVSILGLTTGHLTVCIMTIAPNGYKGPEKNALGNLLVVFILGGAVVGISLGWLWLIGKKYAF</sequence>
<comment type="function">
    <text evidence="4">Nucleoside transporter that can mediate uptake of adenosine, uridine, guanosine or cytidine when expressed in a heterologous system (yeast).</text>
</comment>
<comment type="biophysicochemical properties">
    <kinetics>
        <KM evidence="4">49.1 uM for adenosine</KM>
        <KM evidence="4">27.8 uM for uridine</KM>
        <KM evidence="4">7.3 uM for guanosine</KM>
        <KM evidence="4">94.2 uM for cytidine</KM>
    </kinetics>
</comment>
<comment type="subcellular location">
    <subcellularLocation>
        <location evidence="1">Cell membrane</location>
        <topology evidence="5">Multi-pass membrane protein</topology>
    </subcellularLocation>
    <text>Plasma membrane.</text>
</comment>
<comment type="tissue specificity">
    <text evidence="3">Expressed in leaves and at lowe levels in stems and flowers.</text>
</comment>
<comment type="induction">
    <text evidence="3">By nitrogen deficiency and 5-fluorouracil plus methotrexate.</text>
</comment>
<comment type="similarity">
    <text evidence="5">Belongs to the SLC29A/ENT transporter (TC 2.A.57) family.</text>
</comment>
<protein>
    <recommendedName>
        <fullName>Equilibrative nucleotide transporter 4</fullName>
        <shortName>AtENT4</shortName>
    </recommendedName>
    <alternativeName>
        <fullName>Nucleoside transporter ENT4</fullName>
    </alternativeName>
</protein>
<accession>Q9M0Y2</accession>
<name>ENT4_ARATH</name>
<feature type="chain" id="PRO_0000419157" description="Equilibrative nucleotide transporter 4">
    <location>
        <begin position="1"/>
        <end position="418"/>
    </location>
</feature>
<feature type="transmembrane region" description="Helical" evidence="2">
    <location>
        <begin position="20"/>
        <end position="40"/>
    </location>
</feature>
<feature type="transmembrane region" description="Helical" evidence="2">
    <location>
        <begin position="54"/>
        <end position="74"/>
    </location>
</feature>
<feature type="transmembrane region" description="Helical" evidence="2">
    <location>
        <begin position="85"/>
        <end position="105"/>
    </location>
</feature>
<feature type="transmembrane region" description="Helical" evidence="2">
    <location>
        <begin position="108"/>
        <end position="128"/>
    </location>
</feature>
<feature type="transmembrane region" description="Helical" evidence="2">
    <location>
        <begin position="147"/>
        <end position="169"/>
    </location>
</feature>
<feature type="transmembrane region" description="Helical" evidence="2">
    <location>
        <begin position="186"/>
        <end position="206"/>
    </location>
</feature>
<feature type="transmembrane region" description="Helical" evidence="2">
    <location>
        <begin position="264"/>
        <end position="284"/>
    </location>
</feature>
<feature type="transmembrane region" description="Helical" evidence="2">
    <location>
        <begin position="291"/>
        <end position="311"/>
    </location>
</feature>
<feature type="transmembrane region" description="Helical" evidence="2">
    <location>
        <begin position="326"/>
        <end position="346"/>
    </location>
</feature>
<feature type="transmembrane region" description="Helical" evidence="2">
    <location>
        <begin position="353"/>
        <end position="373"/>
    </location>
</feature>
<feature type="transmembrane region" description="Helical" evidence="2">
    <location>
        <begin position="392"/>
        <end position="412"/>
    </location>
</feature>
<dbReference type="EMBL" id="AF426401">
    <property type="protein sequence ID" value="AAL25097.1"/>
    <property type="molecule type" value="mRNA"/>
</dbReference>
<dbReference type="EMBL" id="AF162444">
    <property type="status" value="NOT_ANNOTATED_CDS"/>
    <property type="molecule type" value="Genomic_DNA"/>
</dbReference>
<dbReference type="EMBL" id="AL161502">
    <property type="protein sequence ID" value="CAB81055.1"/>
    <property type="molecule type" value="Genomic_DNA"/>
</dbReference>
<dbReference type="EMBL" id="CP002687">
    <property type="protein sequence ID" value="AEE82482.1"/>
    <property type="molecule type" value="Genomic_DNA"/>
</dbReference>
<dbReference type="PIR" id="E85064">
    <property type="entry name" value="E85064"/>
</dbReference>
<dbReference type="RefSeq" id="NP_192422.1">
    <property type="nucleotide sequence ID" value="NM_116752.2"/>
</dbReference>
<dbReference type="SMR" id="Q9M0Y2"/>
<dbReference type="FunCoup" id="Q9M0Y2">
    <property type="interactions" value="124"/>
</dbReference>
<dbReference type="STRING" id="3702.Q9M0Y2"/>
<dbReference type="PaxDb" id="3702-AT4G05130.1"/>
<dbReference type="EnsemblPlants" id="AT4G05130.1">
    <property type="protein sequence ID" value="AT4G05130.1"/>
    <property type="gene ID" value="AT4G05130"/>
</dbReference>
<dbReference type="GeneID" id="825858"/>
<dbReference type="Gramene" id="AT4G05130.1">
    <property type="protein sequence ID" value="AT4G05130.1"/>
    <property type="gene ID" value="AT4G05130"/>
</dbReference>
<dbReference type="KEGG" id="ath:AT4G05130"/>
<dbReference type="Araport" id="AT4G05130"/>
<dbReference type="TAIR" id="AT4G05130">
    <property type="gene designation" value="ENT4"/>
</dbReference>
<dbReference type="eggNOG" id="KOG1479">
    <property type="taxonomic scope" value="Eukaryota"/>
</dbReference>
<dbReference type="HOGENOM" id="CLU_021611_5_1_1"/>
<dbReference type="InParanoid" id="Q9M0Y2"/>
<dbReference type="OMA" id="FWLLFIN"/>
<dbReference type="PhylomeDB" id="Q9M0Y2"/>
<dbReference type="PRO" id="PR:Q9M0Y2"/>
<dbReference type="Proteomes" id="UP000006548">
    <property type="component" value="Chromosome 4"/>
</dbReference>
<dbReference type="ExpressionAtlas" id="Q9M0Y2">
    <property type="expression patterns" value="baseline and differential"/>
</dbReference>
<dbReference type="GO" id="GO:0005886">
    <property type="term" value="C:plasma membrane"/>
    <property type="evidence" value="ECO:0007669"/>
    <property type="project" value="UniProtKB-SubCell"/>
</dbReference>
<dbReference type="GO" id="GO:0005337">
    <property type="term" value="F:nucleoside transmembrane transporter activity"/>
    <property type="evidence" value="ECO:0000314"/>
    <property type="project" value="UniProtKB"/>
</dbReference>
<dbReference type="GO" id="GO:0015858">
    <property type="term" value="P:nucleoside transport"/>
    <property type="evidence" value="ECO:0000314"/>
    <property type="project" value="UniProtKB"/>
</dbReference>
<dbReference type="InterPro" id="IPR002259">
    <property type="entry name" value="Eqnu_transpt"/>
</dbReference>
<dbReference type="InterPro" id="IPR036259">
    <property type="entry name" value="MFS_trans_sf"/>
</dbReference>
<dbReference type="PANTHER" id="PTHR10332">
    <property type="entry name" value="EQUILIBRATIVE NUCLEOSIDE TRANSPORTER"/>
    <property type="match status" value="1"/>
</dbReference>
<dbReference type="PANTHER" id="PTHR10332:SF67">
    <property type="entry name" value="EQUILIBRATIVE NUCLEOTIDE TRANSPORTER 4"/>
    <property type="match status" value="1"/>
</dbReference>
<dbReference type="Pfam" id="PF01733">
    <property type="entry name" value="Nucleoside_tran"/>
    <property type="match status" value="1"/>
</dbReference>
<dbReference type="PIRSF" id="PIRSF016379">
    <property type="entry name" value="ENT"/>
    <property type="match status" value="1"/>
</dbReference>
<dbReference type="PRINTS" id="PR01130">
    <property type="entry name" value="DERENTRNSPRT"/>
</dbReference>
<dbReference type="SUPFAM" id="SSF103473">
    <property type="entry name" value="MFS general substrate transporter"/>
    <property type="match status" value="1"/>
</dbReference>